<feature type="chain" id="PRO_0000146447" description="Small ribosomal subunit protein uS12m">
    <location>
        <begin position="1"/>
        <end position="125"/>
    </location>
</feature>
<feature type="region of interest" description="Disordered" evidence="1">
    <location>
        <begin position="1"/>
        <end position="24"/>
    </location>
</feature>
<feature type="compositionally biased region" description="Basic residues" evidence="1">
    <location>
        <begin position="9"/>
        <end position="19"/>
    </location>
</feature>
<reference key="1">
    <citation type="journal article" date="1995" name="Curr. Genet.">
        <title>The genes encoding subunit 3 of NADH dehydrogenase and ribosomal protein S12 are co-transcribed and edited in Pinus sylvestris (L.) mitochondria.</title>
        <authorList>
            <person name="Karpinska B."/>
            <person name="Karpinski S."/>
            <person name="Hallgren J.E."/>
        </authorList>
    </citation>
    <scope>NUCLEOTIDE SEQUENCE [GENOMIC DNA]</scope>
    <scope>RNA EDITING</scope>
    <source>
        <tissue>Cotyledon</tissue>
    </source>
</reference>
<comment type="function">
    <text>Protein S12 is involved in the translation initiation step.</text>
</comment>
<comment type="subcellular location">
    <subcellularLocation>
        <location>Mitochondrion</location>
    </subcellularLocation>
</comment>
<comment type="RNA editing">
    <location>
        <position position="24" evidence="2"/>
    </location>
    <location>
        <position position="35" evidence="2"/>
    </location>
    <location>
        <position position="38" evidence="2"/>
    </location>
    <location>
        <position position="49" evidence="2"/>
    </location>
    <location>
        <position position="74" evidence="2"/>
    </location>
    <location>
        <position position="77" evidence="2"/>
    </location>
    <location>
        <position position="93" evidence="2"/>
    </location>
    <location>
        <position position="107" evidence="2"/>
    </location>
</comment>
<comment type="similarity">
    <text evidence="3">Belongs to the universal ribosomal protein uS12 family.</text>
</comment>
<protein>
    <recommendedName>
        <fullName evidence="3">Small ribosomal subunit protein uS12m</fullName>
    </recommendedName>
    <alternativeName>
        <fullName>Ribosomal protein S12, mitochondrial</fullName>
    </alternativeName>
</protein>
<organism>
    <name type="scientific">Pinus sylvestris</name>
    <name type="common">Scotch pine</name>
    <dbReference type="NCBI Taxonomy" id="3349"/>
    <lineage>
        <taxon>Eukaryota</taxon>
        <taxon>Viridiplantae</taxon>
        <taxon>Streptophyta</taxon>
        <taxon>Embryophyta</taxon>
        <taxon>Tracheophyta</taxon>
        <taxon>Spermatophyta</taxon>
        <taxon>Pinopsida</taxon>
        <taxon>Pinidae</taxon>
        <taxon>Conifers I</taxon>
        <taxon>Pinales</taxon>
        <taxon>Pinaceae</taxon>
        <taxon>Pinus</taxon>
        <taxon>Pinus subgen. Pinus</taxon>
    </lineage>
</organism>
<geneLocation type="mitochondrion"/>
<evidence type="ECO:0000256" key="1">
    <source>
        <dbReference type="SAM" id="MobiDB-lite"/>
    </source>
</evidence>
<evidence type="ECO:0000269" key="2">
    <source>
    </source>
</evidence>
<evidence type="ECO:0000305" key="3"/>
<dbReference type="EMBL" id="X86217">
    <property type="protein sequence ID" value="CAA60118.1"/>
    <property type="status" value="ALT_SEQ"/>
    <property type="molecule type" value="Genomic_DNA"/>
</dbReference>
<dbReference type="PIR" id="S60470">
    <property type="entry name" value="S60470"/>
</dbReference>
<dbReference type="SMR" id="Q36665"/>
<dbReference type="GO" id="GO:0005739">
    <property type="term" value="C:mitochondrion"/>
    <property type="evidence" value="ECO:0007669"/>
    <property type="project" value="UniProtKB-SubCell"/>
</dbReference>
<dbReference type="GO" id="GO:0015935">
    <property type="term" value="C:small ribosomal subunit"/>
    <property type="evidence" value="ECO:0007669"/>
    <property type="project" value="InterPro"/>
</dbReference>
<dbReference type="GO" id="GO:0003735">
    <property type="term" value="F:structural constituent of ribosome"/>
    <property type="evidence" value="ECO:0007669"/>
    <property type="project" value="InterPro"/>
</dbReference>
<dbReference type="GO" id="GO:0006412">
    <property type="term" value="P:translation"/>
    <property type="evidence" value="ECO:0007669"/>
    <property type="project" value="InterPro"/>
</dbReference>
<dbReference type="CDD" id="cd03368">
    <property type="entry name" value="Ribosomal_S12"/>
    <property type="match status" value="1"/>
</dbReference>
<dbReference type="FunFam" id="2.40.50.140:FF:000099">
    <property type="entry name" value="Ribosomal protein S12, mitochondrial"/>
    <property type="match status" value="1"/>
</dbReference>
<dbReference type="Gene3D" id="2.40.50.140">
    <property type="entry name" value="Nucleic acid-binding proteins"/>
    <property type="match status" value="1"/>
</dbReference>
<dbReference type="HAMAP" id="MF_00403_B">
    <property type="entry name" value="Ribosomal_uS12_B"/>
    <property type="match status" value="1"/>
</dbReference>
<dbReference type="InterPro" id="IPR012340">
    <property type="entry name" value="NA-bd_OB-fold"/>
</dbReference>
<dbReference type="InterPro" id="IPR006032">
    <property type="entry name" value="Ribosomal_uS12"/>
</dbReference>
<dbReference type="InterPro" id="IPR005679">
    <property type="entry name" value="Ribosomal_uS12_bac"/>
</dbReference>
<dbReference type="NCBIfam" id="TIGR00981">
    <property type="entry name" value="rpsL_bact"/>
    <property type="match status" value="1"/>
</dbReference>
<dbReference type="PANTHER" id="PTHR11652">
    <property type="entry name" value="30S RIBOSOMAL PROTEIN S12 FAMILY MEMBER"/>
    <property type="match status" value="1"/>
</dbReference>
<dbReference type="Pfam" id="PF00164">
    <property type="entry name" value="Ribosom_S12_S23"/>
    <property type="match status" value="1"/>
</dbReference>
<dbReference type="PIRSF" id="PIRSF002133">
    <property type="entry name" value="Ribosomal_S12/S23"/>
    <property type="match status" value="1"/>
</dbReference>
<dbReference type="PRINTS" id="PR01034">
    <property type="entry name" value="RIBOSOMALS12"/>
</dbReference>
<dbReference type="SUPFAM" id="SSF50249">
    <property type="entry name" value="Nucleic acid-binding proteins"/>
    <property type="match status" value="1"/>
</dbReference>
<dbReference type="PROSITE" id="PS00055">
    <property type="entry name" value="RIBOSOMAL_S12"/>
    <property type="match status" value="1"/>
</dbReference>
<sequence length="125" mass="14310">MPTSNQSIRHGREKKRRTDRTRALEKCPQKRGVCLRVSTRTPKKPNSALRKIAKVRLSNRHDIFAYIPGEGHNLQEHSMVLIRGGRVKDLPGVKFHRIRGVKDLLGIPGRKRGRSKYGAERPKSK</sequence>
<accession>Q36665</accession>
<name>RT12_PINSY</name>
<proteinExistence type="evidence at transcript level"/>
<keyword id="KW-0496">Mitochondrion</keyword>
<keyword id="KW-0687">Ribonucleoprotein</keyword>
<keyword id="KW-0689">Ribosomal protein</keyword>
<keyword id="KW-0691">RNA editing</keyword>
<gene>
    <name type="primary">RPS12</name>
</gene>